<reference key="1">
    <citation type="journal article" date="2001" name="J. Bacteriol.">
        <title>Genome size determination and coding capacity of Sodalis glossinidius, an enteric symbiont of tsetse flies, as revealed by hybridization to Escherichia coli gene arrays.</title>
        <authorList>
            <person name="Akman L."/>
            <person name="Rio R.V.M."/>
            <person name="Beard C.B."/>
            <person name="Aksoy S."/>
        </authorList>
    </citation>
    <scope>NUCLEOTIDE SEQUENCE [GENOMIC DNA]</scope>
</reference>
<reference key="2">
    <citation type="journal article" date="2002" name="Nat. Genet.">
        <title>Genome sequence of the endocellular obligate symbiont of tsetse flies, Wigglesworthia glossinidia.</title>
        <authorList>
            <person name="Akman L."/>
            <person name="Yamashita A."/>
            <person name="Watanabe H."/>
            <person name="Oshima K."/>
            <person name="Shiba T."/>
            <person name="Hattori M."/>
            <person name="Aksoy S."/>
        </authorList>
    </citation>
    <scope>NUCLEOTIDE SEQUENCE [LARGE SCALE GENOMIC DNA]</scope>
</reference>
<name>FTSZ_WIGBR</name>
<comment type="function">
    <text evidence="1">Essential cell division protein that forms a contractile ring structure (Z ring) at the future cell division site. The regulation of the ring assembly controls the timing and the location of cell division. One of the functions of the FtsZ ring is to recruit other cell division proteins to the septum to produce a new cell wall between the dividing cells. Binds GTP and shows GTPase activity.</text>
</comment>
<comment type="subunit">
    <text evidence="1">Homodimer. Polymerizes to form a dynamic ring structure in a strictly GTP-dependent manner. Interacts directly with several other division proteins.</text>
</comment>
<comment type="subcellular location">
    <subcellularLocation>
        <location evidence="1">Cytoplasm</location>
    </subcellularLocation>
    <text evidence="1">Assembles at midcell at the inner surface of the cytoplasmic membrane.</text>
</comment>
<comment type="similarity">
    <text evidence="1">Belongs to the FtsZ family.</text>
</comment>
<dbReference type="EMBL" id="AY024354">
    <property type="protein sequence ID" value="AAK07722.1"/>
    <property type="molecule type" value="Genomic_DNA"/>
</dbReference>
<dbReference type="EMBL" id="BA000021">
    <property type="protein sequence ID" value="BAC24348.1"/>
    <property type="molecule type" value="Genomic_DNA"/>
</dbReference>
<dbReference type="SMR" id="Q9ALA3"/>
<dbReference type="STRING" id="36870.gene:10368690"/>
<dbReference type="KEGG" id="wbr:ftsZ"/>
<dbReference type="eggNOG" id="COG0206">
    <property type="taxonomic scope" value="Bacteria"/>
</dbReference>
<dbReference type="HOGENOM" id="CLU_024865_0_1_6"/>
<dbReference type="OrthoDB" id="9813375at2"/>
<dbReference type="Proteomes" id="UP000000562">
    <property type="component" value="Chromosome"/>
</dbReference>
<dbReference type="GO" id="GO:0032153">
    <property type="term" value="C:cell division site"/>
    <property type="evidence" value="ECO:0007669"/>
    <property type="project" value="UniProtKB-UniRule"/>
</dbReference>
<dbReference type="GO" id="GO:0005737">
    <property type="term" value="C:cytoplasm"/>
    <property type="evidence" value="ECO:0007669"/>
    <property type="project" value="UniProtKB-SubCell"/>
</dbReference>
<dbReference type="GO" id="GO:0005525">
    <property type="term" value="F:GTP binding"/>
    <property type="evidence" value="ECO:0007669"/>
    <property type="project" value="UniProtKB-UniRule"/>
</dbReference>
<dbReference type="GO" id="GO:0003924">
    <property type="term" value="F:GTPase activity"/>
    <property type="evidence" value="ECO:0007669"/>
    <property type="project" value="UniProtKB-UniRule"/>
</dbReference>
<dbReference type="GO" id="GO:0000917">
    <property type="term" value="P:division septum assembly"/>
    <property type="evidence" value="ECO:0007669"/>
    <property type="project" value="UniProtKB-KW"/>
</dbReference>
<dbReference type="GO" id="GO:0043093">
    <property type="term" value="P:FtsZ-dependent cytokinesis"/>
    <property type="evidence" value="ECO:0007669"/>
    <property type="project" value="UniProtKB-UniRule"/>
</dbReference>
<dbReference type="GO" id="GO:0051258">
    <property type="term" value="P:protein polymerization"/>
    <property type="evidence" value="ECO:0007669"/>
    <property type="project" value="UniProtKB-UniRule"/>
</dbReference>
<dbReference type="CDD" id="cd02201">
    <property type="entry name" value="FtsZ_type1"/>
    <property type="match status" value="1"/>
</dbReference>
<dbReference type="FunFam" id="3.30.1330.20:FF:000004">
    <property type="entry name" value="Cell division protein FtsZ"/>
    <property type="match status" value="1"/>
</dbReference>
<dbReference type="FunFam" id="3.40.50.1440:FF:000023">
    <property type="entry name" value="Cell division protein FtsZ"/>
    <property type="match status" value="1"/>
</dbReference>
<dbReference type="Gene3D" id="3.30.1330.20">
    <property type="entry name" value="Tubulin/FtsZ, C-terminal domain"/>
    <property type="match status" value="1"/>
</dbReference>
<dbReference type="Gene3D" id="3.40.50.1440">
    <property type="entry name" value="Tubulin/FtsZ, GTPase domain"/>
    <property type="match status" value="1"/>
</dbReference>
<dbReference type="HAMAP" id="MF_00909">
    <property type="entry name" value="FtsZ"/>
    <property type="match status" value="1"/>
</dbReference>
<dbReference type="InterPro" id="IPR000158">
    <property type="entry name" value="Cell_div_FtsZ"/>
</dbReference>
<dbReference type="InterPro" id="IPR020805">
    <property type="entry name" value="Cell_div_FtsZ_CS"/>
</dbReference>
<dbReference type="InterPro" id="IPR045061">
    <property type="entry name" value="FtsZ/CetZ"/>
</dbReference>
<dbReference type="InterPro" id="IPR024757">
    <property type="entry name" value="FtsZ_C"/>
</dbReference>
<dbReference type="InterPro" id="IPR008280">
    <property type="entry name" value="Tub_FtsZ_C"/>
</dbReference>
<dbReference type="InterPro" id="IPR037103">
    <property type="entry name" value="Tubulin/FtsZ-like_C"/>
</dbReference>
<dbReference type="InterPro" id="IPR018316">
    <property type="entry name" value="Tubulin/FtsZ_2-layer-sand-dom"/>
</dbReference>
<dbReference type="InterPro" id="IPR036525">
    <property type="entry name" value="Tubulin/FtsZ_GTPase_sf"/>
</dbReference>
<dbReference type="InterPro" id="IPR003008">
    <property type="entry name" value="Tubulin_FtsZ_GTPase"/>
</dbReference>
<dbReference type="NCBIfam" id="TIGR00065">
    <property type="entry name" value="ftsZ"/>
    <property type="match status" value="1"/>
</dbReference>
<dbReference type="PANTHER" id="PTHR30314">
    <property type="entry name" value="CELL DIVISION PROTEIN FTSZ-RELATED"/>
    <property type="match status" value="1"/>
</dbReference>
<dbReference type="PANTHER" id="PTHR30314:SF3">
    <property type="entry name" value="MITOCHONDRIAL DIVISION PROTEIN FSZA"/>
    <property type="match status" value="1"/>
</dbReference>
<dbReference type="Pfam" id="PF12327">
    <property type="entry name" value="FtsZ_C"/>
    <property type="match status" value="1"/>
</dbReference>
<dbReference type="Pfam" id="PF00091">
    <property type="entry name" value="Tubulin"/>
    <property type="match status" value="1"/>
</dbReference>
<dbReference type="PRINTS" id="PR00423">
    <property type="entry name" value="CELLDVISFTSZ"/>
</dbReference>
<dbReference type="SMART" id="SM00864">
    <property type="entry name" value="Tubulin"/>
    <property type="match status" value="1"/>
</dbReference>
<dbReference type="SMART" id="SM00865">
    <property type="entry name" value="Tubulin_C"/>
    <property type="match status" value="1"/>
</dbReference>
<dbReference type="SUPFAM" id="SSF55307">
    <property type="entry name" value="Tubulin C-terminal domain-like"/>
    <property type="match status" value="1"/>
</dbReference>
<dbReference type="SUPFAM" id="SSF52490">
    <property type="entry name" value="Tubulin nucleotide-binding domain-like"/>
    <property type="match status" value="1"/>
</dbReference>
<dbReference type="PROSITE" id="PS01134">
    <property type="entry name" value="FTSZ_1"/>
    <property type="match status" value="1"/>
</dbReference>
<dbReference type="PROSITE" id="PS01135">
    <property type="entry name" value="FTSZ_2"/>
    <property type="match status" value="1"/>
</dbReference>
<evidence type="ECO:0000255" key="1">
    <source>
        <dbReference type="HAMAP-Rule" id="MF_00909"/>
    </source>
</evidence>
<gene>
    <name evidence="1" type="primary">ftsZ</name>
    <name type="ordered locus">WIGBR2020</name>
</gene>
<protein>
    <recommendedName>
        <fullName evidence="1">Cell division protein FtsZ</fullName>
    </recommendedName>
</protein>
<accession>Q9ALA3</accession>
<organism>
    <name type="scientific">Wigglesworthia glossinidia brevipalpis</name>
    <dbReference type="NCBI Taxonomy" id="36870"/>
    <lineage>
        <taxon>Bacteria</taxon>
        <taxon>Pseudomonadati</taxon>
        <taxon>Pseudomonadota</taxon>
        <taxon>Gammaproteobacteria</taxon>
        <taxon>Enterobacterales</taxon>
        <taxon>Erwiniaceae</taxon>
        <taxon>Wigglesworthia</taxon>
    </lineage>
</organism>
<feature type="chain" id="PRO_0000114393" description="Cell division protein FtsZ">
    <location>
        <begin position="1"/>
        <end position="384"/>
    </location>
</feature>
<feature type="binding site" evidence="1">
    <location>
        <begin position="20"/>
        <end position="24"/>
    </location>
    <ligand>
        <name>GTP</name>
        <dbReference type="ChEBI" id="CHEBI:37565"/>
    </ligand>
</feature>
<feature type="binding site" evidence="1">
    <location>
        <begin position="107"/>
        <end position="109"/>
    </location>
    <ligand>
        <name>GTP</name>
        <dbReference type="ChEBI" id="CHEBI:37565"/>
    </ligand>
</feature>
<feature type="binding site" evidence="1">
    <location>
        <position position="138"/>
    </location>
    <ligand>
        <name>GTP</name>
        <dbReference type="ChEBI" id="CHEBI:37565"/>
    </ligand>
</feature>
<feature type="binding site" evidence="1">
    <location>
        <position position="142"/>
    </location>
    <ligand>
        <name>GTP</name>
        <dbReference type="ChEBI" id="CHEBI:37565"/>
    </ligand>
</feature>
<feature type="binding site" evidence="1">
    <location>
        <position position="186"/>
    </location>
    <ligand>
        <name>GTP</name>
        <dbReference type="ChEBI" id="CHEBI:37565"/>
    </ligand>
</feature>
<keyword id="KW-0131">Cell cycle</keyword>
<keyword id="KW-0132">Cell division</keyword>
<keyword id="KW-0963">Cytoplasm</keyword>
<keyword id="KW-0342">GTP-binding</keyword>
<keyword id="KW-0547">Nucleotide-binding</keyword>
<keyword id="KW-1185">Reference proteome</keyword>
<keyword id="KW-0717">Septation</keyword>
<proteinExistence type="inferred from homology"/>
<sequence>MFEPIELTSDAVIRVVGIGGGGGNAVEHMVRECIEGVDFFAVNTDAQALRKTEVSQTVQIGSSITKGLGAGANPEVGKNSAEEDKDALRIILDGADMVFIASGMGGGTGTGAAPVIAEIAKDLGILTVAVVTKPFNFEGKKRLIFAEQGIDELSKHVDSLIIIPNDKLLKVLGKGISLLDAFSAANDVLKNAVQGIAELITRPGLINVDFADVKTVMSEMGYAMMGSGISKGDNRAEESSEIAISSPLLEDIDLSGARGVLVNITAGFDLRLDEFEAVGNKVRSFSSDNATVVIGTSLDPSMNDELRVTVVATGIGMDKRPDIKLVTNSTSNKNIMDRFGYRYSDKENTMSKNNNEFSKIKNKTKEDLQSDYLEIPAFLRNQAD</sequence>